<organism>
    <name type="scientific">Bacillus cereus (strain Q1)</name>
    <dbReference type="NCBI Taxonomy" id="361100"/>
    <lineage>
        <taxon>Bacteria</taxon>
        <taxon>Bacillati</taxon>
        <taxon>Bacillota</taxon>
        <taxon>Bacilli</taxon>
        <taxon>Bacillales</taxon>
        <taxon>Bacillaceae</taxon>
        <taxon>Bacillus</taxon>
        <taxon>Bacillus cereus group</taxon>
    </lineage>
</organism>
<reference key="1">
    <citation type="journal article" date="2009" name="J. Bacteriol.">
        <title>Complete genome sequence of the extremophilic Bacillus cereus strain Q1 with industrial applications.</title>
        <authorList>
            <person name="Xiong Z."/>
            <person name="Jiang Y."/>
            <person name="Qi D."/>
            <person name="Lu H."/>
            <person name="Yang F."/>
            <person name="Yang J."/>
            <person name="Chen L."/>
            <person name="Sun L."/>
            <person name="Xu X."/>
            <person name="Xue Y."/>
            <person name="Zhu Y."/>
            <person name="Jin Q."/>
        </authorList>
    </citation>
    <scope>NUCLEOTIDE SEQUENCE [LARGE SCALE GENOMIC DNA]</scope>
    <source>
        <strain>Q1</strain>
    </source>
</reference>
<proteinExistence type="inferred from homology"/>
<comment type="function">
    <text evidence="1">Catalyzes the formation of methylglyoxal from dihydroxyacetone phosphate.</text>
</comment>
<comment type="catalytic activity">
    <reaction evidence="1">
        <text>dihydroxyacetone phosphate = methylglyoxal + phosphate</text>
        <dbReference type="Rhea" id="RHEA:17937"/>
        <dbReference type="ChEBI" id="CHEBI:17158"/>
        <dbReference type="ChEBI" id="CHEBI:43474"/>
        <dbReference type="ChEBI" id="CHEBI:57642"/>
        <dbReference type="EC" id="4.2.3.3"/>
    </reaction>
</comment>
<comment type="similarity">
    <text evidence="1">Belongs to the methylglyoxal synthase family.</text>
</comment>
<name>MGSA_BACCQ</name>
<evidence type="ECO:0000255" key="1">
    <source>
        <dbReference type="HAMAP-Rule" id="MF_00549"/>
    </source>
</evidence>
<dbReference type="EC" id="4.2.3.3" evidence="1"/>
<dbReference type="EMBL" id="CP000227">
    <property type="protein sequence ID" value="ACM12031.1"/>
    <property type="molecule type" value="Genomic_DNA"/>
</dbReference>
<dbReference type="SMR" id="B9IVQ6"/>
<dbReference type="KEGG" id="bcq:BCQ_1603"/>
<dbReference type="HOGENOM" id="CLU_120420_1_0_9"/>
<dbReference type="Proteomes" id="UP000000441">
    <property type="component" value="Chromosome"/>
</dbReference>
<dbReference type="GO" id="GO:0005829">
    <property type="term" value="C:cytosol"/>
    <property type="evidence" value="ECO:0007669"/>
    <property type="project" value="TreeGrafter"/>
</dbReference>
<dbReference type="GO" id="GO:0008929">
    <property type="term" value="F:methylglyoxal synthase activity"/>
    <property type="evidence" value="ECO:0007669"/>
    <property type="project" value="UniProtKB-UniRule"/>
</dbReference>
<dbReference type="GO" id="GO:0019242">
    <property type="term" value="P:methylglyoxal biosynthetic process"/>
    <property type="evidence" value="ECO:0007669"/>
    <property type="project" value="UniProtKB-UniRule"/>
</dbReference>
<dbReference type="CDD" id="cd01422">
    <property type="entry name" value="MGS"/>
    <property type="match status" value="1"/>
</dbReference>
<dbReference type="FunFam" id="3.40.50.1380:FF:000006">
    <property type="entry name" value="Methylglyoxal synthase"/>
    <property type="match status" value="1"/>
</dbReference>
<dbReference type="Gene3D" id="3.40.50.1380">
    <property type="entry name" value="Methylglyoxal synthase-like domain"/>
    <property type="match status" value="1"/>
</dbReference>
<dbReference type="HAMAP" id="MF_00549">
    <property type="entry name" value="Methylglyoxal_synth"/>
    <property type="match status" value="1"/>
</dbReference>
<dbReference type="InterPro" id="IPR004363">
    <property type="entry name" value="Methylgl_synth"/>
</dbReference>
<dbReference type="InterPro" id="IPR018148">
    <property type="entry name" value="Methylglyoxal_synth_AS"/>
</dbReference>
<dbReference type="InterPro" id="IPR011607">
    <property type="entry name" value="MGS-like_dom"/>
</dbReference>
<dbReference type="InterPro" id="IPR036914">
    <property type="entry name" value="MGS-like_dom_sf"/>
</dbReference>
<dbReference type="NCBIfam" id="TIGR00160">
    <property type="entry name" value="MGSA"/>
    <property type="match status" value="1"/>
</dbReference>
<dbReference type="NCBIfam" id="NF003559">
    <property type="entry name" value="PRK05234.1"/>
    <property type="match status" value="1"/>
</dbReference>
<dbReference type="PANTHER" id="PTHR30492">
    <property type="entry name" value="METHYLGLYOXAL SYNTHASE"/>
    <property type="match status" value="1"/>
</dbReference>
<dbReference type="PANTHER" id="PTHR30492:SF0">
    <property type="entry name" value="METHYLGLYOXAL SYNTHASE"/>
    <property type="match status" value="1"/>
</dbReference>
<dbReference type="Pfam" id="PF02142">
    <property type="entry name" value="MGS"/>
    <property type="match status" value="1"/>
</dbReference>
<dbReference type="PIRSF" id="PIRSF006614">
    <property type="entry name" value="Methylglyox_syn"/>
    <property type="match status" value="1"/>
</dbReference>
<dbReference type="SMART" id="SM00851">
    <property type="entry name" value="MGS"/>
    <property type="match status" value="1"/>
</dbReference>
<dbReference type="SUPFAM" id="SSF52335">
    <property type="entry name" value="Methylglyoxal synthase-like"/>
    <property type="match status" value="1"/>
</dbReference>
<dbReference type="PROSITE" id="PS01335">
    <property type="entry name" value="METHYLGLYOXAL_SYNTH"/>
    <property type="match status" value="1"/>
</dbReference>
<dbReference type="PROSITE" id="PS51855">
    <property type="entry name" value="MGS"/>
    <property type="match status" value="1"/>
</dbReference>
<sequence>MKIALIAHDKKKNDMVSFAYAYKPIFEQHELFATGTTGLRIMEATGLVVTRYQSGPLGGDQEIGAMIAKNDLDMVIFFRDPLTAQPHEPDVNALLRLCDVYAIPLATNMASAEMLMHALERGDLDYRKLRK</sequence>
<feature type="chain" id="PRO_1000146620" description="Methylglyoxal synthase">
    <location>
        <begin position="1"/>
        <end position="131"/>
    </location>
</feature>
<feature type="domain" description="MGS-like" evidence="1">
    <location>
        <begin position="1"/>
        <end position="131"/>
    </location>
</feature>
<feature type="active site" description="Proton donor/acceptor" evidence="1">
    <location>
        <position position="60"/>
    </location>
</feature>
<feature type="binding site" evidence="1">
    <location>
        <position position="8"/>
    </location>
    <ligand>
        <name>substrate</name>
    </ligand>
</feature>
<feature type="binding site" evidence="1">
    <location>
        <position position="12"/>
    </location>
    <ligand>
        <name>substrate</name>
    </ligand>
</feature>
<feature type="binding site" evidence="1">
    <location>
        <begin position="34"/>
        <end position="37"/>
    </location>
    <ligand>
        <name>substrate</name>
    </ligand>
</feature>
<feature type="binding site" evidence="1">
    <location>
        <begin position="54"/>
        <end position="55"/>
    </location>
    <ligand>
        <name>substrate</name>
    </ligand>
</feature>
<feature type="binding site" evidence="1">
    <location>
        <position position="87"/>
    </location>
    <ligand>
        <name>substrate</name>
    </ligand>
</feature>
<keyword id="KW-0456">Lyase</keyword>
<gene>
    <name evidence="1" type="primary">mgsA</name>
    <name type="ordered locus">BCQ_1603</name>
</gene>
<accession>B9IVQ6</accession>
<protein>
    <recommendedName>
        <fullName evidence="1">Methylglyoxal synthase</fullName>
        <shortName evidence="1">MGS</shortName>
        <ecNumber evidence="1">4.2.3.3</ecNumber>
    </recommendedName>
</protein>